<proteinExistence type="inferred from homology"/>
<comment type="function">
    <text evidence="1">Catalyzes the reversible conversion of ribose-5-phosphate to ribulose 5-phosphate.</text>
</comment>
<comment type="catalytic activity">
    <reaction evidence="1">
        <text>aldehydo-D-ribose 5-phosphate = D-ribulose 5-phosphate</text>
        <dbReference type="Rhea" id="RHEA:14657"/>
        <dbReference type="ChEBI" id="CHEBI:58121"/>
        <dbReference type="ChEBI" id="CHEBI:58273"/>
        <dbReference type="EC" id="5.3.1.6"/>
    </reaction>
</comment>
<comment type="pathway">
    <text evidence="1">Carbohydrate degradation; pentose phosphate pathway; D-ribose 5-phosphate from D-ribulose 5-phosphate (non-oxidative stage): step 1/1.</text>
</comment>
<comment type="subunit">
    <text evidence="1">Homodimer.</text>
</comment>
<comment type="similarity">
    <text evidence="1">Belongs to the ribose 5-phosphate isomerase family.</text>
</comment>
<reference key="1">
    <citation type="journal article" date="2001" name="Science">
        <title>Comparative genomics of Listeria species.</title>
        <authorList>
            <person name="Glaser P."/>
            <person name="Frangeul L."/>
            <person name="Buchrieser C."/>
            <person name="Rusniok C."/>
            <person name="Amend A."/>
            <person name="Baquero F."/>
            <person name="Berche P."/>
            <person name="Bloecker H."/>
            <person name="Brandt P."/>
            <person name="Chakraborty T."/>
            <person name="Charbit A."/>
            <person name="Chetouani F."/>
            <person name="Couve E."/>
            <person name="de Daruvar A."/>
            <person name="Dehoux P."/>
            <person name="Domann E."/>
            <person name="Dominguez-Bernal G."/>
            <person name="Duchaud E."/>
            <person name="Durant L."/>
            <person name="Dussurget O."/>
            <person name="Entian K.-D."/>
            <person name="Fsihi H."/>
            <person name="Garcia-del Portillo F."/>
            <person name="Garrido P."/>
            <person name="Gautier L."/>
            <person name="Goebel W."/>
            <person name="Gomez-Lopez N."/>
            <person name="Hain T."/>
            <person name="Hauf J."/>
            <person name="Jackson D."/>
            <person name="Jones L.-M."/>
            <person name="Kaerst U."/>
            <person name="Kreft J."/>
            <person name="Kuhn M."/>
            <person name="Kunst F."/>
            <person name="Kurapkat G."/>
            <person name="Madueno E."/>
            <person name="Maitournam A."/>
            <person name="Mata Vicente J."/>
            <person name="Ng E."/>
            <person name="Nedjari H."/>
            <person name="Nordsiek G."/>
            <person name="Novella S."/>
            <person name="de Pablos B."/>
            <person name="Perez-Diaz J.-C."/>
            <person name="Purcell R."/>
            <person name="Remmel B."/>
            <person name="Rose M."/>
            <person name="Schlueter T."/>
            <person name="Simoes N."/>
            <person name="Tierrez A."/>
            <person name="Vazquez-Boland J.-A."/>
            <person name="Voss H."/>
            <person name="Wehland J."/>
            <person name="Cossart P."/>
        </authorList>
    </citation>
    <scope>NUCLEOTIDE SEQUENCE [LARGE SCALE GENOMIC DNA]</scope>
    <source>
        <strain>ATCC BAA-680 / CLIP 11262</strain>
    </source>
</reference>
<keyword id="KW-0413">Isomerase</keyword>
<accession>Q92D46</accession>
<dbReference type="EC" id="5.3.1.6" evidence="1"/>
<dbReference type="EMBL" id="AL596167">
    <property type="protein sequence ID" value="CAC96205.1"/>
    <property type="molecule type" value="Genomic_DNA"/>
</dbReference>
<dbReference type="PIR" id="AE1554">
    <property type="entry name" value="AE1554"/>
</dbReference>
<dbReference type="RefSeq" id="WP_010990700.1">
    <property type="nucleotide sequence ID" value="NC_003212.1"/>
</dbReference>
<dbReference type="SMR" id="Q92D46"/>
<dbReference type="STRING" id="272626.gene:17565304"/>
<dbReference type="KEGG" id="lin:lin0974"/>
<dbReference type="eggNOG" id="COG0120">
    <property type="taxonomic scope" value="Bacteria"/>
</dbReference>
<dbReference type="HOGENOM" id="CLU_056590_1_0_9"/>
<dbReference type="OrthoDB" id="5870696at2"/>
<dbReference type="UniPathway" id="UPA00115">
    <property type="reaction ID" value="UER00412"/>
</dbReference>
<dbReference type="Proteomes" id="UP000002513">
    <property type="component" value="Chromosome"/>
</dbReference>
<dbReference type="GO" id="GO:0004751">
    <property type="term" value="F:ribose-5-phosphate isomerase activity"/>
    <property type="evidence" value="ECO:0007669"/>
    <property type="project" value="UniProtKB-UniRule"/>
</dbReference>
<dbReference type="GO" id="GO:0009052">
    <property type="term" value="P:pentose-phosphate shunt, non-oxidative branch"/>
    <property type="evidence" value="ECO:0007669"/>
    <property type="project" value="UniProtKB-UniRule"/>
</dbReference>
<dbReference type="CDD" id="cd01398">
    <property type="entry name" value="RPI_A"/>
    <property type="match status" value="1"/>
</dbReference>
<dbReference type="FunFam" id="3.40.50.1360:FF:000001">
    <property type="entry name" value="Ribose-5-phosphate isomerase A"/>
    <property type="match status" value="1"/>
</dbReference>
<dbReference type="Gene3D" id="3.30.70.260">
    <property type="match status" value="1"/>
</dbReference>
<dbReference type="Gene3D" id="3.40.50.1360">
    <property type="match status" value="1"/>
</dbReference>
<dbReference type="HAMAP" id="MF_00170">
    <property type="entry name" value="Rib_5P_isom_A"/>
    <property type="match status" value="1"/>
</dbReference>
<dbReference type="InterPro" id="IPR037171">
    <property type="entry name" value="NagB/RpiA_transferase-like"/>
</dbReference>
<dbReference type="InterPro" id="IPR050262">
    <property type="entry name" value="Ribose-5P_isomerase"/>
</dbReference>
<dbReference type="InterPro" id="IPR020672">
    <property type="entry name" value="Ribose5P_isomerase_typA_subgr"/>
</dbReference>
<dbReference type="InterPro" id="IPR004788">
    <property type="entry name" value="Ribose5P_isomerase_type_A"/>
</dbReference>
<dbReference type="NCBIfam" id="NF001924">
    <property type="entry name" value="PRK00702.1"/>
    <property type="match status" value="1"/>
</dbReference>
<dbReference type="NCBIfam" id="TIGR00021">
    <property type="entry name" value="rpiA"/>
    <property type="match status" value="1"/>
</dbReference>
<dbReference type="PANTHER" id="PTHR43748">
    <property type="entry name" value="RIBOSE-5-PHOSPHATE ISOMERASE 3, CHLOROPLASTIC-RELATED"/>
    <property type="match status" value="1"/>
</dbReference>
<dbReference type="PANTHER" id="PTHR43748:SF3">
    <property type="entry name" value="RIBOSE-5-PHOSPHATE ISOMERASE 3, CHLOROPLASTIC-RELATED"/>
    <property type="match status" value="1"/>
</dbReference>
<dbReference type="Pfam" id="PF06026">
    <property type="entry name" value="Rib_5-P_isom_A"/>
    <property type="match status" value="1"/>
</dbReference>
<dbReference type="SUPFAM" id="SSF75445">
    <property type="entry name" value="D-ribose-5-phosphate isomerase (RpiA), lid domain"/>
    <property type="match status" value="1"/>
</dbReference>
<dbReference type="SUPFAM" id="SSF100950">
    <property type="entry name" value="NagB/RpiA/CoA transferase-like"/>
    <property type="match status" value="1"/>
</dbReference>
<feature type="chain" id="PRO_0000158432" description="Ribose-5-phosphate isomerase A">
    <location>
        <begin position="1"/>
        <end position="224"/>
    </location>
</feature>
<feature type="active site" description="Proton acceptor" evidence="1">
    <location>
        <position position="103"/>
    </location>
</feature>
<feature type="binding site" evidence="1">
    <location>
        <begin position="26"/>
        <end position="29"/>
    </location>
    <ligand>
        <name>substrate</name>
    </ligand>
</feature>
<feature type="binding site" evidence="1">
    <location>
        <begin position="81"/>
        <end position="84"/>
    </location>
    <ligand>
        <name>substrate</name>
    </ligand>
</feature>
<feature type="binding site" evidence="1">
    <location>
        <begin position="94"/>
        <end position="97"/>
    </location>
    <ligand>
        <name>substrate</name>
    </ligand>
</feature>
<feature type="binding site" evidence="1">
    <location>
        <position position="121"/>
    </location>
    <ligand>
        <name>substrate</name>
    </ligand>
</feature>
<evidence type="ECO:0000255" key="1">
    <source>
        <dbReference type="HAMAP-Rule" id="MF_00170"/>
    </source>
</evidence>
<protein>
    <recommendedName>
        <fullName evidence="1">Ribose-5-phosphate isomerase A</fullName>
        <ecNumber evidence="1">5.3.1.6</ecNumber>
    </recommendedName>
    <alternativeName>
        <fullName evidence="1">Phosphoriboisomerase A</fullName>
        <shortName evidence="1">PRI</shortName>
    </alternativeName>
</protein>
<sequence>MINQKKIAGEKACEWIEDGMVVGLGTGSTVYYTIEKLGEMVQKGLNITGVSTSIETEQQARTLGIPLKSLNDVTKIDVTIDGADEINQAFQGIKGGGGALLREKMVAQASSKNIWVVGEEKLVTELGKFPLPLEVIPFGWKQIKRMLENDGVETTLRKQSSGEIYETNNGNYILDIINQTFTNPEAWHEKLAGIPGVLEHGLFLHYVDIIICGKASGEIEIIKK</sequence>
<gene>
    <name evidence="1" type="primary">rpiA</name>
    <name type="ordered locus">lin0974</name>
</gene>
<name>RPIA_LISIN</name>
<organism>
    <name type="scientific">Listeria innocua serovar 6a (strain ATCC BAA-680 / CLIP 11262)</name>
    <dbReference type="NCBI Taxonomy" id="272626"/>
    <lineage>
        <taxon>Bacteria</taxon>
        <taxon>Bacillati</taxon>
        <taxon>Bacillota</taxon>
        <taxon>Bacilli</taxon>
        <taxon>Bacillales</taxon>
        <taxon>Listeriaceae</taxon>
        <taxon>Listeria</taxon>
    </lineage>
</organism>